<accession>Q82TQ1</accession>
<feature type="chain" id="PRO_0000298140" description="Cell division topological specificity factor">
    <location>
        <begin position="1"/>
        <end position="98"/>
    </location>
</feature>
<dbReference type="EMBL" id="AL954747">
    <property type="protein sequence ID" value="CAD85740.1"/>
    <property type="molecule type" value="Genomic_DNA"/>
</dbReference>
<dbReference type="RefSeq" id="WP_011112371.1">
    <property type="nucleotide sequence ID" value="NC_004757.1"/>
</dbReference>
<dbReference type="SMR" id="Q82TQ1"/>
<dbReference type="STRING" id="228410.NE1829"/>
<dbReference type="GeneID" id="87104988"/>
<dbReference type="KEGG" id="neu:NE1829"/>
<dbReference type="eggNOG" id="COG0851">
    <property type="taxonomic scope" value="Bacteria"/>
</dbReference>
<dbReference type="HOGENOM" id="CLU_137929_2_1_4"/>
<dbReference type="OrthoDB" id="9802655at2"/>
<dbReference type="PhylomeDB" id="Q82TQ1"/>
<dbReference type="Proteomes" id="UP000001416">
    <property type="component" value="Chromosome"/>
</dbReference>
<dbReference type="GO" id="GO:0051301">
    <property type="term" value="P:cell division"/>
    <property type="evidence" value="ECO:0007669"/>
    <property type="project" value="UniProtKB-KW"/>
</dbReference>
<dbReference type="GO" id="GO:0032955">
    <property type="term" value="P:regulation of division septum assembly"/>
    <property type="evidence" value="ECO:0007669"/>
    <property type="project" value="InterPro"/>
</dbReference>
<dbReference type="FunFam" id="3.30.1070.10:FF:000001">
    <property type="entry name" value="Cell division topological specificity factor"/>
    <property type="match status" value="1"/>
</dbReference>
<dbReference type="Gene3D" id="3.30.1070.10">
    <property type="entry name" value="Cell division topological specificity factor MinE"/>
    <property type="match status" value="1"/>
</dbReference>
<dbReference type="HAMAP" id="MF_00262">
    <property type="entry name" value="MinE"/>
    <property type="match status" value="1"/>
</dbReference>
<dbReference type="InterPro" id="IPR005527">
    <property type="entry name" value="MinE"/>
</dbReference>
<dbReference type="InterPro" id="IPR036707">
    <property type="entry name" value="MinE_sf"/>
</dbReference>
<dbReference type="NCBIfam" id="TIGR01215">
    <property type="entry name" value="minE"/>
    <property type="match status" value="1"/>
</dbReference>
<dbReference type="NCBIfam" id="NF001422">
    <property type="entry name" value="PRK00296.1"/>
    <property type="match status" value="1"/>
</dbReference>
<dbReference type="Pfam" id="PF03776">
    <property type="entry name" value="MinE"/>
    <property type="match status" value="1"/>
</dbReference>
<dbReference type="SUPFAM" id="SSF55229">
    <property type="entry name" value="Cell division protein MinE topological specificity domain"/>
    <property type="match status" value="1"/>
</dbReference>
<reference key="1">
    <citation type="journal article" date="2003" name="J. Bacteriol.">
        <title>Complete genome sequence of the ammonia-oxidizing bacterium and obligate chemolithoautotroph Nitrosomonas europaea.</title>
        <authorList>
            <person name="Chain P."/>
            <person name="Lamerdin J.E."/>
            <person name="Larimer F.W."/>
            <person name="Regala W."/>
            <person name="Lao V."/>
            <person name="Land M.L."/>
            <person name="Hauser L."/>
            <person name="Hooper A.B."/>
            <person name="Klotz M.G."/>
            <person name="Norton J."/>
            <person name="Sayavedra-Soto L.A."/>
            <person name="Arciero D.M."/>
            <person name="Hommes N.G."/>
            <person name="Whittaker M.M."/>
            <person name="Arp D.J."/>
        </authorList>
    </citation>
    <scope>NUCLEOTIDE SEQUENCE [LARGE SCALE GENOMIC DNA]</scope>
    <source>
        <strain>ATCC 19718 / CIP 103999 / KCTC 2705 / NBRC 14298</strain>
    </source>
</reference>
<protein>
    <recommendedName>
        <fullName evidence="1">Cell division topological specificity factor</fullName>
    </recommendedName>
</protein>
<keyword id="KW-0131">Cell cycle</keyword>
<keyword id="KW-0132">Cell division</keyword>
<keyword id="KW-1185">Reference proteome</keyword>
<gene>
    <name evidence="1" type="primary">minE</name>
    <name type="ordered locus">NE1829</name>
</gene>
<comment type="function">
    <text evidence="1">Prevents the cell division inhibition by proteins MinC and MinD at internal division sites while permitting inhibition at polar sites. This ensures cell division at the proper site by restricting the formation of a division septum at the midpoint of the long axis of the cell.</text>
</comment>
<comment type="similarity">
    <text evidence="1">Belongs to the MinE family.</text>
</comment>
<name>MINE_NITEU</name>
<evidence type="ECO:0000255" key="1">
    <source>
        <dbReference type="HAMAP-Rule" id="MF_00262"/>
    </source>
</evidence>
<sequence length="98" mass="11567">MSLLDYFRSSKSKTASVAKERLQILVAHERYYRNKPSYLPQLQEELMQVIRKYVQVDQDAISVKFEQDDNQETLELNIILPDSQNTRNTQQDAVRNSF</sequence>
<proteinExistence type="inferred from homology"/>
<organism>
    <name type="scientific">Nitrosomonas europaea (strain ATCC 19718 / CIP 103999 / KCTC 2705 / NBRC 14298)</name>
    <dbReference type="NCBI Taxonomy" id="228410"/>
    <lineage>
        <taxon>Bacteria</taxon>
        <taxon>Pseudomonadati</taxon>
        <taxon>Pseudomonadota</taxon>
        <taxon>Betaproteobacteria</taxon>
        <taxon>Nitrosomonadales</taxon>
        <taxon>Nitrosomonadaceae</taxon>
        <taxon>Nitrosomonas</taxon>
    </lineage>
</organism>